<keyword id="KW-0066">ATP synthesis</keyword>
<keyword id="KW-0997">Cell inner membrane</keyword>
<keyword id="KW-1003">Cell membrane</keyword>
<keyword id="KW-0139">CF(1)</keyword>
<keyword id="KW-0375">Hydrogen ion transport</keyword>
<keyword id="KW-0406">Ion transport</keyword>
<keyword id="KW-0472">Membrane</keyword>
<keyword id="KW-0813">Transport</keyword>
<comment type="function">
    <text evidence="1">Produces ATP from ADP in the presence of a proton gradient across the membrane.</text>
</comment>
<comment type="subunit">
    <text evidence="1">F-type ATPases have 2 components, CF(1) - the catalytic core - and CF(0) - the membrane proton channel. CF(1) has five subunits: alpha(3), beta(3), gamma(1), delta(1), epsilon(1). CF(0) has three main subunits: a, b and c.</text>
</comment>
<comment type="subcellular location">
    <subcellularLocation>
        <location evidence="1">Cell inner membrane</location>
        <topology evidence="1">Peripheral membrane protein</topology>
    </subcellularLocation>
</comment>
<comment type="similarity">
    <text evidence="1">Belongs to the ATPase epsilon chain family.</text>
</comment>
<protein>
    <recommendedName>
        <fullName evidence="1">ATP synthase epsilon chain</fullName>
    </recommendedName>
    <alternativeName>
        <fullName evidence="1">ATP synthase F1 sector epsilon subunit</fullName>
    </alternativeName>
    <alternativeName>
        <fullName evidence="1">F-ATPase epsilon subunit</fullName>
    </alternativeName>
</protein>
<dbReference type="EMBL" id="CU928160">
    <property type="protein sequence ID" value="CAR00709.1"/>
    <property type="molecule type" value="Genomic_DNA"/>
</dbReference>
<dbReference type="RefSeq" id="WP_001251965.1">
    <property type="nucleotide sequence ID" value="NC_011741.1"/>
</dbReference>
<dbReference type="SMR" id="B7M587"/>
<dbReference type="KEGG" id="ecr:ECIAI1_3915"/>
<dbReference type="HOGENOM" id="CLU_084338_2_0_6"/>
<dbReference type="GO" id="GO:0005886">
    <property type="term" value="C:plasma membrane"/>
    <property type="evidence" value="ECO:0007669"/>
    <property type="project" value="UniProtKB-SubCell"/>
</dbReference>
<dbReference type="GO" id="GO:0045259">
    <property type="term" value="C:proton-transporting ATP synthase complex"/>
    <property type="evidence" value="ECO:0007669"/>
    <property type="project" value="UniProtKB-KW"/>
</dbReference>
<dbReference type="GO" id="GO:0005524">
    <property type="term" value="F:ATP binding"/>
    <property type="evidence" value="ECO:0007669"/>
    <property type="project" value="UniProtKB-UniRule"/>
</dbReference>
<dbReference type="GO" id="GO:0046933">
    <property type="term" value="F:proton-transporting ATP synthase activity, rotational mechanism"/>
    <property type="evidence" value="ECO:0007669"/>
    <property type="project" value="UniProtKB-UniRule"/>
</dbReference>
<dbReference type="CDD" id="cd12152">
    <property type="entry name" value="F1-ATPase_delta"/>
    <property type="match status" value="1"/>
</dbReference>
<dbReference type="FunFam" id="1.20.5.440:FF:000001">
    <property type="entry name" value="ATP synthase epsilon chain"/>
    <property type="match status" value="1"/>
</dbReference>
<dbReference type="FunFam" id="2.60.15.10:FF:000001">
    <property type="entry name" value="ATP synthase epsilon chain"/>
    <property type="match status" value="1"/>
</dbReference>
<dbReference type="Gene3D" id="1.20.5.440">
    <property type="entry name" value="ATP synthase delta/epsilon subunit, C-terminal domain"/>
    <property type="match status" value="1"/>
</dbReference>
<dbReference type="Gene3D" id="2.60.15.10">
    <property type="entry name" value="F0F1 ATP synthase delta/epsilon subunit, N-terminal"/>
    <property type="match status" value="1"/>
</dbReference>
<dbReference type="HAMAP" id="MF_00530">
    <property type="entry name" value="ATP_synth_epsil_bac"/>
    <property type="match status" value="1"/>
</dbReference>
<dbReference type="InterPro" id="IPR036794">
    <property type="entry name" value="ATP_F1_dsu/esu_C_sf"/>
</dbReference>
<dbReference type="InterPro" id="IPR001469">
    <property type="entry name" value="ATP_synth_F1_dsu/esu"/>
</dbReference>
<dbReference type="InterPro" id="IPR020546">
    <property type="entry name" value="ATP_synth_F1_dsu/esu_N"/>
</dbReference>
<dbReference type="InterPro" id="IPR020547">
    <property type="entry name" value="ATP_synth_F1_esu_C"/>
</dbReference>
<dbReference type="InterPro" id="IPR036771">
    <property type="entry name" value="ATPsynth_dsu/esu_N"/>
</dbReference>
<dbReference type="NCBIfam" id="TIGR01216">
    <property type="entry name" value="ATP_synt_epsi"/>
    <property type="match status" value="1"/>
</dbReference>
<dbReference type="NCBIfam" id="NF001847">
    <property type="entry name" value="PRK00571.1-4"/>
    <property type="match status" value="1"/>
</dbReference>
<dbReference type="PANTHER" id="PTHR13822">
    <property type="entry name" value="ATP SYNTHASE DELTA/EPSILON CHAIN"/>
    <property type="match status" value="1"/>
</dbReference>
<dbReference type="PANTHER" id="PTHR13822:SF10">
    <property type="entry name" value="ATP SYNTHASE EPSILON CHAIN, CHLOROPLASTIC"/>
    <property type="match status" value="1"/>
</dbReference>
<dbReference type="Pfam" id="PF00401">
    <property type="entry name" value="ATP-synt_DE"/>
    <property type="match status" value="1"/>
</dbReference>
<dbReference type="Pfam" id="PF02823">
    <property type="entry name" value="ATP-synt_DE_N"/>
    <property type="match status" value="1"/>
</dbReference>
<dbReference type="SUPFAM" id="SSF46604">
    <property type="entry name" value="Epsilon subunit of F1F0-ATP synthase C-terminal domain"/>
    <property type="match status" value="1"/>
</dbReference>
<dbReference type="SUPFAM" id="SSF51344">
    <property type="entry name" value="Epsilon subunit of F1F0-ATP synthase N-terminal domain"/>
    <property type="match status" value="1"/>
</dbReference>
<feature type="chain" id="PRO_1000127852" description="ATP synthase epsilon chain">
    <location>
        <begin position="1"/>
        <end position="139"/>
    </location>
</feature>
<name>ATPE_ECO8A</name>
<gene>
    <name evidence="1" type="primary">atpC</name>
    <name type="ordered locus">ECIAI1_3915</name>
</gene>
<reference key="1">
    <citation type="journal article" date="2009" name="PLoS Genet.">
        <title>Organised genome dynamics in the Escherichia coli species results in highly diverse adaptive paths.</title>
        <authorList>
            <person name="Touchon M."/>
            <person name="Hoede C."/>
            <person name="Tenaillon O."/>
            <person name="Barbe V."/>
            <person name="Baeriswyl S."/>
            <person name="Bidet P."/>
            <person name="Bingen E."/>
            <person name="Bonacorsi S."/>
            <person name="Bouchier C."/>
            <person name="Bouvet O."/>
            <person name="Calteau A."/>
            <person name="Chiapello H."/>
            <person name="Clermont O."/>
            <person name="Cruveiller S."/>
            <person name="Danchin A."/>
            <person name="Diard M."/>
            <person name="Dossat C."/>
            <person name="Karoui M.E."/>
            <person name="Frapy E."/>
            <person name="Garry L."/>
            <person name="Ghigo J.M."/>
            <person name="Gilles A.M."/>
            <person name="Johnson J."/>
            <person name="Le Bouguenec C."/>
            <person name="Lescat M."/>
            <person name="Mangenot S."/>
            <person name="Martinez-Jehanne V."/>
            <person name="Matic I."/>
            <person name="Nassif X."/>
            <person name="Oztas S."/>
            <person name="Petit M.A."/>
            <person name="Pichon C."/>
            <person name="Rouy Z."/>
            <person name="Ruf C.S."/>
            <person name="Schneider D."/>
            <person name="Tourret J."/>
            <person name="Vacherie B."/>
            <person name="Vallenet D."/>
            <person name="Medigue C."/>
            <person name="Rocha E.P.C."/>
            <person name="Denamur E."/>
        </authorList>
    </citation>
    <scope>NUCLEOTIDE SEQUENCE [LARGE SCALE GENOMIC DNA]</scope>
    <source>
        <strain>IAI1</strain>
    </source>
</reference>
<organism>
    <name type="scientific">Escherichia coli O8 (strain IAI1)</name>
    <dbReference type="NCBI Taxonomy" id="585034"/>
    <lineage>
        <taxon>Bacteria</taxon>
        <taxon>Pseudomonadati</taxon>
        <taxon>Pseudomonadota</taxon>
        <taxon>Gammaproteobacteria</taxon>
        <taxon>Enterobacterales</taxon>
        <taxon>Enterobacteriaceae</taxon>
        <taxon>Escherichia</taxon>
    </lineage>
</organism>
<accession>B7M587</accession>
<sequence length="139" mass="15068">MAMTYHLDVVSAEQQMFSGLVEKIQVTGSEGELGIYPGHAPLLTAIKPGMIRIVKQHGHEEFIYLSGGILEVQPGNVTVLADTAIRGQDLDEARAMEAKRKAEEHISSSHGDVDYAQASAELAKAIAQLRVIELTKKAM</sequence>
<proteinExistence type="inferred from homology"/>
<evidence type="ECO:0000255" key="1">
    <source>
        <dbReference type="HAMAP-Rule" id="MF_00530"/>
    </source>
</evidence>